<proteinExistence type="inferred from homology"/>
<reference key="1">
    <citation type="submission" date="2006-10" db="EMBL/GenBank/DDBJ databases">
        <title>Complete sequence of chromosome of Pelobacter propionicus DSM 2379.</title>
        <authorList>
            <consortium name="US DOE Joint Genome Institute"/>
            <person name="Copeland A."/>
            <person name="Lucas S."/>
            <person name="Lapidus A."/>
            <person name="Barry K."/>
            <person name="Detter J.C."/>
            <person name="Glavina del Rio T."/>
            <person name="Hammon N."/>
            <person name="Israni S."/>
            <person name="Dalin E."/>
            <person name="Tice H."/>
            <person name="Pitluck S."/>
            <person name="Saunders E."/>
            <person name="Brettin T."/>
            <person name="Bruce D."/>
            <person name="Han C."/>
            <person name="Tapia R."/>
            <person name="Schmutz J."/>
            <person name="Larimer F."/>
            <person name="Land M."/>
            <person name="Hauser L."/>
            <person name="Kyrpides N."/>
            <person name="Kim E."/>
            <person name="Lovley D."/>
            <person name="Richardson P."/>
        </authorList>
    </citation>
    <scope>NUCLEOTIDE SEQUENCE [LARGE SCALE GENOMIC DNA]</scope>
    <source>
        <strain>DSM 2379 / NBRC 103807 / OttBd1</strain>
    </source>
</reference>
<sequence length="123" mass="13728">MPTINQLIRIGRENKRDKSTAPALKCCPQKRGVCTRVYTTTPKKPNSALRKVARVRLTNGIEVTSYIPGVGHNLQEHSVVLIRGGRVKDLPGVRYHIVRGTLDSVGVKDRKKSRSKYGAKRPK</sequence>
<keyword id="KW-0488">Methylation</keyword>
<keyword id="KW-1185">Reference proteome</keyword>
<keyword id="KW-0687">Ribonucleoprotein</keyword>
<keyword id="KW-0689">Ribosomal protein</keyword>
<keyword id="KW-0694">RNA-binding</keyword>
<keyword id="KW-0699">rRNA-binding</keyword>
<keyword id="KW-0820">tRNA-binding</keyword>
<protein>
    <recommendedName>
        <fullName evidence="2">Small ribosomal subunit protein uS12</fullName>
    </recommendedName>
    <alternativeName>
        <fullName evidence="4">30S ribosomal protein S12</fullName>
    </alternativeName>
</protein>
<organism>
    <name type="scientific">Pelobacter propionicus (strain DSM 2379 / NBRC 103807 / OttBd1)</name>
    <dbReference type="NCBI Taxonomy" id="338966"/>
    <lineage>
        <taxon>Bacteria</taxon>
        <taxon>Pseudomonadati</taxon>
        <taxon>Thermodesulfobacteriota</taxon>
        <taxon>Desulfuromonadia</taxon>
        <taxon>Desulfuromonadales</taxon>
        <taxon>Desulfuromonadaceae</taxon>
        <taxon>Pelobacter</taxon>
    </lineage>
</organism>
<comment type="function">
    <text evidence="2">With S4 and S5 plays an important role in translational accuracy.</text>
</comment>
<comment type="function">
    <text evidence="2">Interacts with and stabilizes bases of the 16S rRNA that are involved in tRNA selection in the A site and with the mRNA backbone. Located at the interface of the 30S and 50S subunits, it traverses the body of the 30S subunit contacting proteins on the other side and probably holding the rRNA structure together. The combined cluster of proteins S8, S12 and S17 appears to hold together the shoulder and platform of the 30S subunit.</text>
</comment>
<comment type="subunit">
    <text evidence="2">Part of the 30S ribosomal subunit. Contacts proteins S8 and S17. May interact with IF1 in the 30S initiation complex.</text>
</comment>
<comment type="similarity">
    <text evidence="2">Belongs to the universal ribosomal protein uS12 family.</text>
</comment>
<dbReference type="EMBL" id="CP000482">
    <property type="protein sequence ID" value="ABK98306.1"/>
    <property type="molecule type" value="Genomic_DNA"/>
</dbReference>
<dbReference type="RefSeq" id="WP_011734619.1">
    <property type="nucleotide sequence ID" value="NC_008609.1"/>
</dbReference>
<dbReference type="SMR" id="A1ALT6"/>
<dbReference type="STRING" id="338966.Ppro_0675"/>
<dbReference type="KEGG" id="ppd:Ppro_0675"/>
<dbReference type="eggNOG" id="COG0048">
    <property type="taxonomic scope" value="Bacteria"/>
</dbReference>
<dbReference type="HOGENOM" id="CLU_104295_1_2_7"/>
<dbReference type="OrthoDB" id="9802366at2"/>
<dbReference type="Proteomes" id="UP000006732">
    <property type="component" value="Chromosome"/>
</dbReference>
<dbReference type="GO" id="GO:0015935">
    <property type="term" value="C:small ribosomal subunit"/>
    <property type="evidence" value="ECO:0007669"/>
    <property type="project" value="InterPro"/>
</dbReference>
<dbReference type="GO" id="GO:0019843">
    <property type="term" value="F:rRNA binding"/>
    <property type="evidence" value="ECO:0007669"/>
    <property type="project" value="UniProtKB-UniRule"/>
</dbReference>
<dbReference type="GO" id="GO:0003735">
    <property type="term" value="F:structural constituent of ribosome"/>
    <property type="evidence" value="ECO:0007669"/>
    <property type="project" value="InterPro"/>
</dbReference>
<dbReference type="GO" id="GO:0000049">
    <property type="term" value="F:tRNA binding"/>
    <property type="evidence" value="ECO:0007669"/>
    <property type="project" value="UniProtKB-UniRule"/>
</dbReference>
<dbReference type="GO" id="GO:0006412">
    <property type="term" value="P:translation"/>
    <property type="evidence" value="ECO:0007669"/>
    <property type="project" value="UniProtKB-UniRule"/>
</dbReference>
<dbReference type="CDD" id="cd03368">
    <property type="entry name" value="Ribosomal_S12"/>
    <property type="match status" value="1"/>
</dbReference>
<dbReference type="FunFam" id="2.40.50.140:FF:000001">
    <property type="entry name" value="30S ribosomal protein S12"/>
    <property type="match status" value="1"/>
</dbReference>
<dbReference type="Gene3D" id="2.40.50.140">
    <property type="entry name" value="Nucleic acid-binding proteins"/>
    <property type="match status" value="1"/>
</dbReference>
<dbReference type="HAMAP" id="MF_00403_B">
    <property type="entry name" value="Ribosomal_uS12_B"/>
    <property type="match status" value="1"/>
</dbReference>
<dbReference type="InterPro" id="IPR012340">
    <property type="entry name" value="NA-bd_OB-fold"/>
</dbReference>
<dbReference type="InterPro" id="IPR006032">
    <property type="entry name" value="Ribosomal_uS12"/>
</dbReference>
<dbReference type="InterPro" id="IPR005679">
    <property type="entry name" value="Ribosomal_uS12_bac"/>
</dbReference>
<dbReference type="NCBIfam" id="TIGR00981">
    <property type="entry name" value="rpsL_bact"/>
    <property type="match status" value="1"/>
</dbReference>
<dbReference type="PANTHER" id="PTHR11652">
    <property type="entry name" value="30S RIBOSOMAL PROTEIN S12 FAMILY MEMBER"/>
    <property type="match status" value="1"/>
</dbReference>
<dbReference type="Pfam" id="PF00164">
    <property type="entry name" value="Ribosom_S12_S23"/>
    <property type="match status" value="1"/>
</dbReference>
<dbReference type="PIRSF" id="PIRSF002133">
    <property type="entry name" value="Ribosomal_S12/S23"/>
    <property type="match status" value="1"/>
</dbReference>
<dbReference type="PRINTS" id="PR01034">
    <property type="entry name" value="RIBOSOMALS12"/>
</dbReference>
<dbReference type="SUPFAM" id="SSF50249">
    <property type="entry name" value="Nucleic acid-binding proteins"/>
    <property type="match status" value="1"/>
</dbReference>
<dbReference type="PROSITE" id="PS00055">
    <property type="entry name" value="RIBOSOMAL_S12"/>
    <property type="match status" value="1"/>
</dbReference>
<name>RS12_PELPD</name>
<feature type="chain" id="PRO_0000296011" description="Small ribosomal subunit protein uS12">
    <location>
        <begin position="1"/>
        <end position="123"/>
    </location>
</feature>
<feature type="region of interest" description="Disordered" evidence="3">
    <location>
        <begin position="104"/>
        <end position="123"/>
    </location>
</feature>
<feature type="compositionally biased region" description="Basic residues" evidence="3">
    <location>
        <begin position="109"/>
        <end position="123"/>
    </location>
</feature>
<feature type="modified residue" description="3-methylthioaspartic acid" evidence="1">
    <location>
        <position position="89"/>
    </location>
</feature>
<evidence type="ECO:0000250" key="1"/>
<evidence type="ECO:0000255" key="2">
    <source>
        <dbReference type="HAMAP-Rule" id="MF_00403"/>
    </source>
</evidence>
<evidence type="ECO:0000256" key="3">
    <source>
        <dbReference type="SAM" id="MobiDB-lite"/>
    </source>
</evidence>
<evidence type="ECO:0000305" key="4"/>
<accession>A1ALT6</accession>
<gene>
    <name evidence="2" type="primary">rpsL</name>
    <name type="ordered locus">Ppro_0675</name>
</gene>